<evidence type="ECO:0000250" key="1">
    <source>
        <dbReference type="UniProtKB" id="P84704"/>
    </source>
</evidence>
<evidence type="ECO:0000255" key="2"/>
<evidence type="ECO:0000303" key="3">
    <source>
    </source>
</evidence>
<evidence type="ECO:0000305" key="4"/>
<evidence type="ECO:0000305" key="5">
    <source>
    </source>
</evidence>
<reference key="1">
    <citation type="journal article" date="2018" name="Peptides">
        <title>Definition of the R-superfamily of conotoxins: structural convergence of helix-loop-helix peptidic scaffolds.</title>
        <authorList>
            <person name="Moeller C."/>
            <person name="Dovell S."/>
            <person name="Melaun C."/>
            <person name="Mari F."/>
        </authorList>
    </citation>
    <scope>NUCLEOTIDE SEQUENCE [MRNA]</scope>
    <source>
        <tissue>Venom duct</tissue>
    </source>
</reference>
<accession>A0A3G1VU78</accession>
<keyword id="KW-0165">Cleavage on pair of basic residues</keyword>
<keyword id="KW-1015">Disulfide bond</keyword>
<keyword id="KW-0872">Ion channel impairing toxin</keyword>
<keyword id="KW-0528">Neurotoxin</keyword>
<keyword id="KW-0632">Potassium channel impairing toxin</keyword>
<keyword id="KW-0964">Secreted</keyword>
<keyword id="KW-0732">Signal</keyword>
<keyword id="KW-0800">Toxin</keyword>
<feature type="signal peptide" evidence="2">
    <location>
        <begin position="1"/>
        <end position="22"/>
    </location>
</feature>
<feature type="propeptide" id="PRO_0000446996" evidence="5">
    <location>
        <begin position="23"/>
        <end position="85"/>
    </location>
</feature>
<feature type="peptide" id="PRO_0000446997" description="Conotoxin vil14.4" evidence="5">
    <location>
        <begin position="86"/>
        <end position="112"/>
    </location>
</feature>
<feature type="disulfide bond" evidence="1">
    <location>
        <begin position="91"/>
        <end position="111"/>
    </location>
</feature>
<feature type="disulfide bond" evidence="1">
    <location>
        <begin position="95"/>
        <end position="107"/>
    </location>
</feature>
<sequence length="112" mass="12866">MGFRVLVLVVMATTSALPFTFFEEPGRSPFRPALRSEEAQALRHGLTLLLARRADGQPPDMRQPEMRRPEVRQLEFAELSVGQRRWDVDQCMYYCLTGVVGYSYTECQTMCT</sequence>
<organism>
    <name type="scientific">Conus villepinii</name>
    <name type="common">Villepin's cone</name>
    <dbReference type="NCBI Taxonomy" id="257347"/>
    <lineage>
        <taxon>Eukaryota</taxon>
        <taxon>Metazoa</taxon>
        <taxon>Spiralia</taxon>
        <taxon>Lophotrochozoa</taxon>
        <taxon>Mollusca</taxon>
        <taxon>Gastropoda</taxon>
        <taxon>Caenogastropoda</taxon>
        <taxon>Neogastropoda</taxon>
        <taxon>Conoidea</taxon>
        <taxon>Conidae</taxon>
        <taxon>Conus</taxon>
        <taxon>Dauciconus</taxon>
    </lineage>
</organism>
<proteinExistence type="inferred from homology"/>
<comment type="subcellular location">
    <subcellularLocation>
        <location evidence="5">Secreted</location>
    </subcellularLocation>
</comment>
<comment type="tissue specificity">
    <text evidence="5">Expressed by the venom duct.</text>
</comment>
<comment type="domain">
    <text evidence="4">The cysteine framework is XIV (C-C-C-C).</text>
</comment>
<comment type="similarity">
    <text evidence="4">Belongs to the conotoxin R superfamily.</text>
</comment>
<dbReference type="EMBL" id="MH750035">
    <property type="protein sequence ID" value="AYK27408.1"/>
    <property type="molecule type" value="mRNA"/>
</dbReference>
<dbReference type="SMR" id="A0A3G1VU78"/>
<dbReference type="GO" id="GO:0005576">
    <property type="term" value="C:extracellular region"/>
    <property type="evidence" value="ECO:0007669"/>
    <property type="project" value="UniProtKB-SubCell"/>
</dbReference>
<dbReference type="GO" id="GO:0015459">
    <property type="term" value="F:potassium channel regulator activity"/>
    <property type="evidence" value="ECO:0007669"/>
    <property type="project" value="UniProtKB-KW"/>
</dbReference>
<dbReference type="GO" id="GO:0090729">
    <property type="term" value="F:toxin activity"/>
    <property type="evidence" value="ECO:0007669"/>
    <property type="project" value="UniProtKB-KW"/>
</dbReference>
<name>CRE4_CONVL</name>
<protein>
    <recommendedName>
        <fullName evidence="3">Conotoxin vil14.4</fullName>
    </recommendedName>
</protein>